<reference key="1">
    <citation type="journal article" date="2007" name="PLoS ONE">
        <title>Analysis of the neurotoxin complex genes in Clostridium botulinum A1-A4 and B1 strains: BoNT/A3, /Ba4 and /B1 clusters are located within plasmids.</title>
        <authorList>
            <person name="Smith T.J."/>
            <person name="Hill K.K."/>
            <person name="Foley B.T."/>
            <person name="Detter J.C."/>
            <person name="Munk A.C."/>
            <person name="Bruce D.C."/>
            <person name="Doggett N.A."/>
            <person name="Smith L.A."/>
            <person name="Marks J.D."/>
            <person name="Xie G."/>
            <person name="Brettin T.S."/>
        </authorList>
    </citation>
    <scope>NUCLEOTIDE SEQUENCE [LARGE SCALE GENOMIC DNA]</scope>
    <source>
        <strain>ATCC 19397 / Type A</strain>
    </source>
</reference>
<evidence type="ECO:0000255" key="1">
    <source>
        <dbReference type="HAMAP-Rule" id="MF_00139"/>
    </source>
</evidence>
<evidence type="ECO:0000255" key="2">
    <source>
        <dbReference type="PROSITE-ProRule" id="PRU01202"/>
    </source>
</evidence>
<gene>
    <name evidence="1" type="primary">purH</name>
    <name type="ordered locus">CLB_2838</name>
</gene>
<sequence>MIKRALISVFDKTGILDLAKFLESRDVEIISTGGTYKHLKENGVKVIDIEEVTGFPEMLDGRVKTLNPLIHGGILAIRDNEEHMKVIEEKGINPIDMVVVNLYPFFNKVEENLSFDEKVEFIDIGGPTMIRAAAKNFKDVVVLTDTKDYENVINEIKENNQVNIQTRKKLAGKVFNLMSAYDAAISNFLLEEEYPEYLTLSYKKNMDLRYGENPHQTAAYYTSTVGKYPMKNFEKLNGKELSYNNIKDMDIAWKTVCEFEEVACCALKHNTPCGVAIGDTVQEAYTKAYECDPISIFGGIVAFNRKVDKETAENLAKIFLEIVVAPDFDEDALEVLKNKKNLRVIKCEEKSTEGKDMAKVDGGILVQKSDNKLLEDTKVVTEKSPTEQEMKDLIFGMKVVKYVKSNAIVVVKDGMAKGIGGGQVNRIWAAKEALDRAGDGVVLASDAFFPFGDVAEEAAKWGIKAIIQPGGSIRDEESIKVCNEKGISMVFTGIRHFKH</sequence>
<protein>
    <recommendedName>
        <fullName evidence="1">Bifunctional purine biosynthesis protein PurH</fullName>
    </recommendedName>
    <domain>
        <recommendedName>
            <fullName evidence="1">Phosphoribosylaminoimidazolecarboxamide formyltransferase</fullName>
            <ecNumber evidence="1">2.1.2.3</ecNumber>
        </recommendedName>
        <alternativeName>
            <fullName evidence="1">AICAR transformylase</fullName>
        </alternativeName>
    </domain>
    <domain>
        <recommendedName>
            <fullName evidence="1">IMP cyclohydrolase</fullName>
            <ecNumber evidence="1">3.5.4.10</ecNumber>
        </recommendedName>
        <alternativeName>
            <fullName evidence="1">ATIC</fullName>
        </alternativeName>
        <alternativeName>
            <fullName evidence="1">IMP synthase</fullName>
        </alternativeName>
        <alternativeName>
            <fullName evidence="1">Inosinicase</fullName>
        </alternativeName>
    </domain>
</protein>
<keyword id="KW-0378">Hydrolase</keyword>
<keyword id="KW-0511">Multifunctional enzyme</keyword>
<keyword id="KW-0658">Purine biosynthesis</keyword>
<keyword id="KW-0808">Transferase</keyword>
<comment type="catalytic activity">
    <reaction evidence="1">
        <text>(6R)-10-formyltetrahydrofolate + 5-amino-1-(5-phospho-beta-D-ribosyl)imidazole-4-carboxamide = 5-formamido-1-(5-phospho-D-ribosyl)imidazole-4-carboxamide + (6S)-5,6,7,8-tetrahydrofolate</text>
        <dbReference type="Rhea" id="RHEA:22192"/>
        <dbReference type="ChEBI" id="CHEBI:57453"/>
        <dbReference type="ChEBI" id="CHEBI:58467"/>
        <dbReference type="ChEBI" id="CHEBI:58475"/>
        <dbReference type="ChEBI" id="CHEBI:195366"/>
        <dbReference type="EC" id="2.1.2.3"/>
    </reaction>
</comment>
<comment type="catalytic activity">
    <reaction evidence="1">
        <text>IMP + H2O = 5-formamido-1-(5-phospho-D-ribosyl)imidazole-4-carboxamide</text>
        <dbReference type="Rhea" id="RHEA:18445"/>
        <dbReference type="ChEBI" id="CHEBI:15377"/>
        <dbReference type="ChEBI" id="CHEBI:58053"/>
        <dbReference type="ChEBI" id="CHEBI:58467"/>
        <dbReference type="EC" id="3.5.4.10"/>
    </reaction>
</comment>
<comment type="pathway">
    <text evidence="1">Purine metabolism; IMP biosynthesis via de novo pathway; 5-formamido-1-(5-phospho-D-ribosyl)imidazole-4-carboxamide from 5-amino-1-(5-phospho-D-ribosyl)imidazole-4-carboxamide (10-formyl THF route): step 1/1.</text>
</comment>
<comment type="pathway">
    <text evidence="1">Purine metabolism; IMP biosynthesis via de novo pathway; IMP from 5-formamido-1-(5-phospho-D-ribosyl)imidazole-4-carboxamide: step 1/1.</text>
</comment>
<comment type="domain">
    <text evidence="1">The IMP cyclohydrolase activity resides in the N-terminal region.</text>
</comment>
<comment type="similarity">
    <text evidence="1">Belongs to the PurH family.</text>
</comment>
<proteinExistence type="inferred from homology"/>
<name>PUR9_CLOB1</name>
<organism>
    <name type="scientific">Clostridium botulinum (strain ATCC 19397 / Type A)</name>
    <dbReference type="NCBI Taxonomy" id="441770"/>
    <lineage>
        <taxon>Bacteria</taxon>
        <taxon>Bacillati</taxon>
        <taxon>Bacillota</taxon>
        <taxon>Clostridia</taxon>
        <taxon>Eubacteriales</taxon>
        <taxon>Clostridiaceae</taxon>
        <taxon>Clostridium</taxon>
    </lineage>
</organism>
<accession>A7FXD3</accession>
<dbReference type="EC" id="2.1.2.3" evidence="1"/>
<dbReference type="EC" id="3.5.4.10" evidence="1"/>
<dbReference type="EMBL" id="CP000726">
    <property type="protein sequence ID" value="ABS32935.1"/>
    <property type="molecule type" value="Genomic_DNA"/>
</dbReference>
<dbReference type="RefSeq" id="WP_003385254.1">
    <property type="nucleotide sequence ID" value="NC_009697.1"/>
</dbReference>
<dbReference type="SMR" id="A7FXD3"/>
<dbReference type="GeneID" id="5187064"/>
<dbReference type="KEGG" id="cba:CLB_2838"/>
<dbReference type="HOGENOM" id="CLU_016316_5_2_9"/>
<dbReference type="UniPathway" id="UPA00074">
    <property type="reaction ID" value="UER00133"/>
</dbReference>
<dbReference type="UniPathway" id="UPA00074">
    <property type="reaction ID" value="UER00135"/>
</dbReference>
<dbReference type="GO" id="GO:0005829">
    <property type="term" value="C:cytosol"/>
    <property type="evidence" value="ECO:0007669"/>
    <property type="project" value="TreeGrafter"/>
</dbReference>
<dbReference type="GO" id="GO:0003937">
    <property type="term" value="F:IMP cyclohydrolase activity"/>
    <property type="evidence" value="ECO:0007669"/>
    <property type="project" value="UniProtKB-UniRule"/>
</dbReference>
<dbReference type="GO" id="GO:0004643">
    <property type="term" value="F:phosphoribosylaminoimidazolecarboxamide formyltransferase activity"/>
    <property type="evidence" value="ECO:0007669"/>
    <property type="project" value="UniProtKB-UniRule"/>
</dbReference>
<dbReference type="GO" id="GO:0006189">
    <property type="term" value="P:'de novo' IMP biosynthetic process"/>
    <property type="evidence" value="ECO:0007669"/>
    <property type="project" value="UniProtKB-UniRule"/>
</dbReference>
<dbReference type="CDD" id="cd01421">
    <property type="entry name" value="IMPCH"/>
    <property type="match status" value="1"/>
</dbReference>
<dbReference type="FunFam" id="3.40.140.20:FF:000001">
    <property type="entry name" value="Bifunctional purine biosynthesis protein PurH"/>
    <property type="match status" value="1"/>
</dbReference>
<dbReference type="FunFam" id="3.40.140.20:FF:000002">
    <property type="entry name" value="Bifunctional purine biosynthesis protein PurH"/>
    <property type="match status" value="1"/>
</dbReference>
<dbReference type="FunFam" id="3.40.50.1380:FF:000001">
    <property type="entry name" value="Bifunctional purine biosynthesis protein PurH"/>
    <property type="match status" value="1"/>
</dbReference>
<dbReference type="Gene3D" id="3.40.140.20">
    <property type="match status" value="2"/>
</dbReference>
<dbReference type="Gene3D" id="3.40.50.1380">
    <property type="entry name" value="Methylglyoxal synthase-like domain"/>
    <property type="match status" value="1"/>
</dbReference>
<dbReference type="HAMAP" id="MF_00139">
    <property type="entry name" value="PurH"/>
    <property type="match status" value="1"/>
</dbReference>
<dbReference type="InterPro" id="IPR024051">
    <property type="entry name" value="AICAR_Tfase_dup_dom_sf"/>
</dbReference>
<dbReference type="InterPro" id="IPR016193">
    <property type="entry name" value="Cytidine_deaminase-like"/>
</dbReference>
<dbReference type="InterPro" id="IPR011607">
    <property type="entry name" value="MGS-like_dom"/>
</dbReference>
<dbReference type="InterPro" id="IPR036914">
    <property type="entry name" value="MGS-like_dom_sf"/>
</dbReference>
<dbReference type="InterPro" id="IPR002695">
    <property type="entry name" value="PurH-like"/>
</dbReference>
<dbReference type="NCBIfam" id="NF002049">
    <property type="entry name" value="PRK00881.1"/>
    <property type="match status" value="1"/>
</dbReference>
<dbReference type="NCBIfam" id="TIGR00355">
    <property type="entry name" value="purH"/>
    <property type="match status" value="1"/>
</dbReference>
<dbReference type="PANTHER" id="PTHR11692:SF0">
    <property type="entry name" value="BIFUNCTIONAL PURINE BIOSYNTHESIS PROTEIN ATIC"/>
    <property type="match status" value="1"/>
</dbReference>
<dbReference type="PANTHER" id="PTHR11692">
    <property type="entry name" value="BIFUNCTIONAL PURINE BIOSYNTHESIS PROTEIN PURH"/>
    <property type="match status" value="1"/>
</dbReference>
<dbReference type="Pfam" id="PF01808">
    <property type="entry name" value="AICARFT_IMPCHas"/>
    <property type="match status" value="1"/>
</dbReference>
<dbReference type="Pfam" id="PF02142">
    <property type="entry name" value="MGS"/>
    <property type="match status" value="1"/>
</dbReference>
<dbReference type="PIRSF" id="PIRSF000414">
    <property type="entry name" value="AICARFT_IMPCHas"/>
    <property type="match status" value="1"/>
</dbReference>
<dbReference type="SMART" id="SM00798">
    <property type="entry name" value="AICARFT_IMPCHas"/>
    <property type="match status" value="1"/>
</dbReference>
<dbReference type="SMART" id="SM00851">
    <property type="entry name" value="MGS"/>
    <property type="match status" value="1"/>
</dbReference>
<dbReference type="SUPFAM" id="SSF53927">
    <property type="entry name" value="Cytidine deaminase-like"/>
    <property type="match status" value="1"/>
</dbReference>
<dbReference type="SUPFAM" id="SSF52335">
    <property type="entry name" value="Methylglyoxal synthase-like"/>
    <property type="match status" value="1"/>
</dbReference>
<dbReference type="PROSITE" id="PS51855">
    <property type="entry name" value="MGS"/>
    <property type="match status" value="1"/>
</dbReference>
<feature type="chain" id="PRO_1000018875" description="Bifunctional purine biosynthesis protein PurH">
    <location>
        <begin position="1"/>
        <end position="499"/>
    </location>
</feature>
<feature type="domain" description="MGS-like" evidence="2">
    <location>
        <begin position="1"/>
        <end position="144"/>
    </location>
</feature>